<accession>Q6GG06</accession>
<organism>
    <name type="scientific">Staphylococcus aureus (strain MRSA252)</name>
    <dbReference type="NCBI Taxonomy" id="282458"/>
    <lineage>
        <taxon>Bacteria</taxon>
        <taxon>Bacillati</taxon>
        <taxon>Bacillota</taxon>
        <taxon>Bacilli</taxon>
        <taxon>Bacillales</taxon>
        <taxon>Staphylococcaceae</taxon>
        <taxon>Staphylococcus</taxon>
    </lineage>
</organism>
<feature type="chain" id="PRO_0000389851" description="Acetyl-coenzyme A carboxylase carboxyl transferase subunit beta">
    <location>
        <begin position="1"/>
        <end position="285"/>
    </location>
</feature>
<feature type="domain" description="CoA carboxyltransferase N-terminal" evidence="2">
    <location>
        <begin position="29"/>
        <end position="285"/>
    </location>
</feature>
<feature type="zinc finger region" description="C4-type" evidence="1">
    <location>
        <begin position="33"/>
        <end position="55"/>
    </location>
</feature>
<feature type="binding site" evidence="1">
    <location>
        <position position="33"/>
    </location>
    <ligand>
        <name>Zn(2+)</name>
        <dbReference type="ChEBI" id="CHEBI:29105"/>
    </ligand>
</feature>
<feature type="binding site" evidence="1">
    <location>
        <position position="36"/>
    </location>
    <ligand>
        <name>Zn(2+)</name>
        <dbReference type="ChEBI" id="CHEBI:29105"/>
    </ligand>
</feature>
<feature type="binding site" evidence="1">
    <location>
        <position position="52"/>
    </location>
    <ligand>
        <name>Zn(2+)</name>
        <dbReference type="ChEBI" id="CHEBI:29105"/>
    </ligand>
</feature>
<feature type="binding site" evidence="1">
    <location>
        <position position="55"/>
    </location>
    <ligand>
        <name>Zn(2+)</name>
        <dbReference type="ChEBI" id="CHEBI:29105"/>
    </ligand>
</feature>
<protein>
    <recommendedName>
        <fullName evidence="1">Acetyl-coenzyme A carboxylase carboxyl transferase subunit beta</fullName>
        <shortName evidence="1">ACCase subunit beta</shortName>
        <shortName evidence="1">Acetyl-CoA carboxylase carboxyltransferase subunit beta</shortName>
        <ecNumber evidence="1">2.1.3.15</ecNumber>
    </recommendedName>
</protein>
<name>ACCD_STAAR</name>
<gene>
    <name evidence="1" type="primary">accD</name>
    <name type="ordered locus">SAR1779</name>
</gene>
<evidence type="ECO:0000255" key="1">
    <source>
        <dbReference type="HAMAP-Rule" id="MF_01395"/>
    </source>
</evidence>
<evidence type="ECO:0000255" key="2">
    <source>
        <dbReference type="PROSITE-ProRule" id="PRU01136"/>
    </source>
</evidence>
<sequence length="285" mass="31872">MFKDFFNRTKKKKYLTVQDSKNNDVPAGIMTKCPKCKKIMYTKELAENLNVCFNCDHHIALTAYKRIEAISDEGSFTEFDKGMTSANPLDFPSYLEKIEKDQQKTGLKEAVVTGTAQLDGMKFGVAVMDSRFRMGSMGSVIGEKICRIIDYCTENRLPFILFSASGGARMQEGIISLMQMGKTSVSLKRHSDAGLLYISYLTHPTTGGVSASFASVGDINLSEPKALIGFAGRRVIEQTINEKLPDDFQTAEFLLEHGQLDKVVHRNDMRQTLSEILKIHQEVTK</sequence>
<comment type="function">
    <text evidence="1">Component of the acetyl coenzyme A carboxylase (ACC) complex. Biotin carboxylase (BC) catalyzes the carboxylation of biotin on its carrier protein (BCCP) and then the CO(2) group is transferred by the transcarboxylase to acetyl-CoA to form malonyl-CoA.</text>
</comment>
<comment type="catalytic activity">
    <reaction evidence="1">
        <text>N(6)-carboxybiotinyl-L-lysyl-[protein] + acetyl-CoA = N(6)-biotinyl-L-lysyl-[protein] + malonyl-CoA</text>
        <dbReference type="Rhea" id="RHEA:54728"/>
        <dbReference type="Rhea" id="RHEA-COMP:10505"/>
        <dbReference type="Rhea" id="RHEA-COMP:10506"/>
        <dbReference type="ChEBI" id="CHEBI:57288"/>
        <dbReference type="ChEBI" id="CHEBI:57384"/>
        <dbReference type="ChEBI" id="CHEBI:83144"/>
        <dbReference type="ChEBI" id="CHEBI:83145"/>
        <dbReference type="EC" id="2.1.3.15"/>
    </reaction>
</comment>
<comment type="cofactor">
    <cofactor evidence="1">
        <name>Zn(2+)</name>
        <dbReference type="ChEBI" id="CHEBI:29105"/>
    </cofactor>
    <text evidence="1">Binds 1 zinc ion per subunit.</text>
</comment>
<comment type="pathway">
    <text evidence="1">Lipid metabolism; malonyl-CoA biosynthesis; malonyl-CoA from acetyl-CoA: step 1/1.</text>
</comment>
<comment type="subunit">
    <text evidence="1">Acetyl-CoA carboxylase is a heterohexamer composed of biotin carboxyl carrier protein (AccB), biotin carboxylase (AccC) and two subunits each of ACCase subunit alpha (AccA) and ACCase subunit beta (AccD).</text>
</comment>
<comment type="subcellular location">
    <subcellularLocation>
        <location evidence="1">Cytoplasm</location>
    </subcellularLocation>
</comment>
<comment type="similarity">
    <text evidence="1">Belongs to the AccD/PCCB family.</text>
</comment>
<proteinExistence type="inferred from homology"/>
<dbReference type="EC" id="2.1.3.15" evidence="1"/>
<dbReference type="EMBL" id="BX571856">
    <property type="protein sequence ID" value="CAG40770.1"/>
    <property type="molecule type" value="Genomic_DNA"/>
</dbReference>
<dbReference type="RefSeq" id="WP_000471571.1">
    <property type="nucleotide sequence ID" value="NC_002952.2"/>
</dbReference>
<dbReference type="SMR" id="Q6GG06"/>
<dbReference type="KEGG" id="sar:SAR1779"/>
<dbReference type="HOGENOM" id="CLU_015486_1_0_9"/>
<dbReference type="UniPathway" id="UPA00655">
    <property type="reaction ID" value="UER00711"/>
</dbReference>
<dbReference type="Proteomes" id="UP000000596">
    <property type="component" value="Chromosome"/>
</dbReference>
<dbReference type="GO" id="GO:0009317">
    <property type="term" value="C:acetyl-CoA carboxylase complex"/>
    <property type="evidence" value="ECO:0007669"/>
    <property type="project" value="InterPro"/>
</dbReference>
<dbReference type="GO" id="GO:0003989">
    <property type="term" value="F:acetyl-CoA carboxylase activity"/>
    <property type="evidence" value="ECO:0007669"/>
    <property type="project" value="InterPro"/>
</dbReference>
<dbReference type="GO" id="GO:0005524">
    <property type="term" value="F:ATP binding"/>
    <property type="evidence" value="ECO:0007669"/>
    <property type="project" value="UniProtKB-KW"/>
</dbReference>
<dbReference type="GO" id="GO:0016743">
    <property type="term" value="F:carboxyl- or carbamoyltransferase activity"/>
    <property type="evidence" value="ECO:0007669"/>
    <property type="project" value="UniProtKB-UniRule"/>
</dbReference>
<dbReference type="GO" id="GO:0008270">
    <property type="term" value="F:zinc ion binding"/>
    <property type="evidence" value="ECO:0007669"/>
    <property type="project" value="UniProtKB-UniRule"/>
</dbReference>
<dbReference type="GO" id="GO:0006633">
    <property type="term" value="P:fatty acid biosynthetic process"/>
    <property type="evidence" value="ECO:0007669"/>
    <property type="project" value="UniProtKB-KW"/>
</dbReference>
<dbReference type="GO" id="GO:2001295">
    <property type="term" value="P:malonyl-CoA biosynthetic process"/>
    <property type="evidence" value="ECO:0007669"/>
    <property type="project" value="UniProtKB-UniRule"/>
</dbReference>
<dbReference type="Gene3D" id="3.90.226.10">
    <property type="entry name" value="2-enoyl-CoA Hydratase, Chain A, domain 1"/>
    <property type="match status" value="1"/>
</dbReference>
<dbReference type="HAMAP" id="MF_01395">
    <property type="entry name" value="AcetylCoA_CT_beta"/>
    <property type="match status" value="1"/>
</dbReference>
<dbReference type="InterPro" id="IPR034733">
    <property type="entry name" value="AcCoA_carboxyl_beta"/>
</dbReference>
<dbReference type="InterPro" id="IPR000438">
    <property type="entry name" value="Acetyl_CoA_COase_Trfase_b_su"/>
</dbReference>
<dbReference type="InterPro" id="IPR029045">
    <property type="entry name" value="ClpP/crotonase-like_dom_sf"/>
</dbReference>
<dbReference type="InterPro" id="IPR011762">
    <property type="entry name" value="COA_CT_N"/>
</dbReference>
<dbReference type="InterPro" id="IPR041010">
    <property type="entry name" value="Znf-ACC"/>
</dbReference>
<dbReference type="NCBIfam" id="TIGR00515">
    <property type="entry name" value="accD"/>
    <property type="match status" value="1"/>
</dbReference>
<dbReference type="PANTHER" id="PTHR42995">
    <property type="entry name" value="ACETYL-COENZYME A CARBOXYLASE CARBOXYL TRANSFERASE SUBUNIT BETA, CHLOROPLASTIC"/>
    <property type="match status" value="1"/>
</dbReference>
<dbReference type="PANTHER" id="PTHR42995:SF5">
    <property type="entry name" value="ACETYL-COENZYME A CARBOXYLASE CARBOXYL TRANSFERASE SUBUNIT BETA, CHLOROPLASTIC"/>
    <property type="match status" value="1"/>
</dbReference>
<dbReference type="Pfam" id="PF01039">
    <property type="entry name" value="Carboxyl_trans"/>
    <property type="match status" value="1"/>
</dbReference>
<dbReference type="Pfam" id="PF17848">
    <property type="entry name" value="Zn_ribbon_ACC"/>
    <property type="match status" value="1"/>
</dbReference>
<dbReference type="PRINTS" id="PR01070">
    <property type="entry name" value="ACCCTRFRASEB"/>
</dbReference>
<dbReference type="SUPFAM" id="SSF52096">
    <property type="entry name" value="ClpP/crotonase"/>
    <property type="match status" value="1"/>
</dbReference>
<dbReference type="PROSITE" id="PS50980">
    <property type="entry name" value="COA_CT_NTER"/>
    <property type="match status" value="1"/>
</dbReference>
<reference key="1">
    <citation type="journal article" date="2004" name="Proc. Natl. Acad. Sci. U.S.A.">
        <title>Complete genomes of two clinical Staphylococcus aureus strains: evidence for the rapid evolution of virulence and drug resistance.</title>
        <authorList>
            <person name="Holden M.T.G."/>
            <person name="Feil E.J."/>
            <person name="Lindsay J.A."/>
            <person name="Peacock S.J."/>
            <person name="Day N.P.J."/>
            <person name="Enright M.C."/>
            <person name="Foster T.J."/>
            <person name="Moore C.E."/>
            <person name="Hurst L."/>
            <person name="Atkin R."/>
            <person name="Barron A."/>
            <person name="Bason N."/>
            <person name="Bentley S.D."/>
            <person name="Chillingworth C."/>
            <person name="Chillingworth T."/>
            <person name="Churcher C."/>
            <person name="Clark L."/>
            <person name="Corton C."/>
            <person name="Cronin A."/>
            <person name="Doggett J."/>
            <person name="Dowd L."/>
            <person name="Feltwell T."/>
            <person name="Hance Z."/>
            <person name="Harris B."/>
            <person name="Hauser H."/>
            <person name="Holroyd S."/>
            <person name="Jagels K."/>
            <person name="James K.D."/>
            <person name="Lennard N."/>
            <person name="Line A."/>
            <person name="Mayes R."/>
            <person name="Moule S."/>
            <person name="Mungall K."/>
            <person name="Ormond D."/>
            <person name="Quail M.A."/>
            <person name="Rabbinowitsch E."/>
            <person name="Rutherford K.M."/>
            <person name="Sanders M."/>
            <person name="Sharp S."/>
            <person name="Simmonds M."/>
            <person name="Stevens K."/>
            <person name="Whitehead S."/>
            <person name="Barrell B.G."/>
            <person name="Spratt B.G."/>
            <person name="Parkhill J."/>
        </authorList>
    </citation>
    <scope>NUCLEOTIDE SEQUENCE [LARGE SCALE GENOMIC DNA]</scope>
    <source>
        <strain>MRSA252</strain>
    </source>
</reference>
<keyword id="KW-0067">ATP-binding</keyword>
<keyword id="KW-0963">Cytoplasm</keyword>
<keyword id="KW-0275">Fatty acid biosynthesis</keyword>
<keyword id="KW-0276">Fatty acid metabolism</keyword>
<keyword id="KW-0444">Lipid biosynthesis</keyword>
<keyword id="KW-0443">Lipid metabolism</keyword>
<keyword id="KW-0479">Metal-binding</keyword>
<keyword id="KW-0547">Nucleotide-binding</keyword>
<keyword id="KW-0808">Transferase</keyword>
<keyword id="KW-0862">Zinc</keyword>
<keyword id="KW-0863">Zinc-finger</keyword>